<dbReference type="EC" id="6.3.2.4" evidence="2"/>
<dbReference type="EMBL" id="CP000419">
    <property type="protein sequence ID" value="ABJ66696.1"/>
    <property type="molecule type" value="Genomic_DNA"/>
</dbReference>
<dbReference type="RefSeq" id="WP_011681512.1">
    <property type="nucleotide sequence ID" value="NZ_CP086001.1"/>
</dbReference>
<dbReference type="SMR" id="Q03JC6"/>
<dbReference type="KEGG" id="ste:STER_1544"/>
<dbReference type="HOGENOM" id="CLU_039268_0_0_9"/>
<dbReference type="UniPathway" id="UPA00219"/>
<dbReference type="GO" id="GO:0005829">
    <property type="term" value="C:cytosol"/>
    <property type="evidence" value="ECO:0007669"/>
    <property type="project" value="TreeGrafter"/>
</dbReference>
<dbReference type="GO" id="GO:0005524">
    <property type="term" value="F:ATP binding"/>
    <property type="evidence" value="ECO:0007669"/>
    <property type="project" value="UniProtKB-KW"/>
</dbReference>
<dbReference type="GO" id="GO:0008716">
    <property type="term" value="F:D-alanine-D-alanine ligase activity"/>
    <property type="evidence" value="ECO:0007669"/>
    <property type="project" value="UniProtKB-UniRule"/>
</dbReference>
<dbReference type="GO" id="GO:0046872">
    <property type="term" value="F:metal ion binding"/>
    <property type="evidence" value="ECO:0007669"/>
    <property type="project" value="UniProtKB-KW"/>
</dbReference>
<dbReference type="GO" id="GO:0071555">
    <property type="term" value="P:cell wall organization"/>
    <property type="evidence" value="ECO:0007669"/>
    <property type="project" value="UniProtKB-KW"/>
</dbReference>
<dbReference type="GO" id="GO:0009252">
    <property type="term" value="P:peptidoglycan biosynthetic process"/>
    <property type="evidence" value="ECO:0007669"/>
    <property type="project" value="UniProtKB-UniRule"/>
</dbReference>
<dbReference type="GO" id="GO:0008360">
    <property type="term" value="P:regulation of cell shape"/>
    <property type="evidence" value="ECO:0007669"/>
    <property type="project" value="UniProtKB-KW"/>
</dbReference>
<dbReference type="FunFam" id="3.30.1490.20:FF:000007">
    <property type="entry name" value="D-alanine--D-alanine ligase"/>
    <property type="match status" value="1"/>
</dbReference>
<dbReference type="FunFam" id="3.30.470.20:FF:000008">
    <property type="entry name" value="D-alanine--D-alanine ligase"/>
    <property type="match status" value="1"/>
</dbReference>
<dbReference type="Gene3D" id="3.40.50.20">
    <property type="match status" value="1"/>
</dbReference>
<dbReference type="Gene3D" id="3.30.1490.20">
    <property type="entry name" value="ATP-grasp fold, A domain"/>
    <property type="match status" value="1"/>
</dbReference>
<dbReference type="Gene3D" id="3.30.470.20">
    <property type="entry name" value="ATP-grasp fold, B domain"/>
    <property type="match status" value="1"/>
</dbReference>
<dbReference type="HAMAP" id="MF_00047">
    <property type="entry name" value="Dala_Dala_lig"/>
    <property type="match status" value="1"/>
</dbReference>
<dbReference type="InterPro" id="IPR011761">
    <property type="entry name" value="ATP-grasp"/>
</dbReference>
<dbReference type="InterPro" id="IPR013815">
    <property type="entry name" value="ATP_grasp_subdomain_1"/>
</dbReference>
<dbReference type="InterPro" id="IPR000291">
    <property type="entry name" value="D-Ala_lig_Van_CS"/>
</dbReference>
<dbReference type="InterPro" id="IPR005905">
    <property type="entry name" value="D_ala_D_ala"/>
</dbReference>
<dbReference type="InterPro" id="IPR011095">
    <property type="entry name" value="Dala_Dala_lig_C"/>
</dbReference>
<dbReference type="InterPro" id="IPR011127">
    <property type="entry name" value="Dala_Dala_lig_N"/>
</dbReference>
<dbReference type="InterPro" id="IPR016185">
    <property type="entry name" value="PreATP-grasp_dom_sf"/>
</dbReference>
<dbReference type="NCBIfam" id="TIGR01205">
    <property type="entry name" value="D_ala_D_alaTIGR"/>
    <property type="match status" value="1"/>
</dbReference>
<dbReference type="NCBIfam" id="NF002528">
    <property type="entry name" value="PRK01966.1-4"/>
    <property type="match status" value="1"/>
</dbReference>
<dbReference type="NCBIfam" id="NF002529">
    <property type="entry name" value="PRK01966.1-5"/>
    <property type="match status" value="1"/>
</dbReference>
<dbReference type="PANTHER" id="PTHR23132">
    <property type="entry name" value="D-ALANINE--D-ALANINE LIGASE"/>
    <property type="match status" value="1"/>
</dbReference>
<dbReference type="PANTHER" id="PTHR23132:SF25">
    <property type="entry name" value="D-ALANINE--D-ALANINE LIGASE A"/>
    <property type="match status" value="1"/>
</dbReference>
<dbReference type="Pfam" id="PF07478">
    <property type="entry name" value="Dala_Dala_lig_C"/>
    <property type="match status" value="1"/>
</dbReference>
<dbReference type="Pfam" id="PF01820">
    <property type="entry name" value="Dala_Dala_lig_N"/>
    <property type="match status" value="1"/>
</dbReference>
<dbReference type="PIRSF" id="PIRSF039102">
    <property type="entry name" value="Ddl/VanB"/>
    <property type="match status" value="1"/>
</dbReference>
<dbReference type="SUPFAM" id="SSF56059">
    <property type="entry name" value="Glutathione synthetase ATP-binding domain-like"/>
    <property type="match status" value="1"/>
</dbReference>
<dbReference type="SUPFAM" id="SSF52440">
    <property type="entry name" value="PreATP-grasp domain"/>
    <property type="match status" value="1"/>
</dbReference>
<dbReference type="PROSITE" id="PS50975">
    <property type="entry name" value="ATP_GRASP"/>
    <property type="match status" value="1"/>
</dbReference>
<dbReference type="PROSITE" id="PS00843">
    <property type="entry name" value="DALA_DALA_LIGASE_1"/>
    <property type="match status" value="1"/>
</dbReference>
<dbReference type="PROSITE" id="PS00844">
    <property type="entry name" value="DALA_DALA_LIGASE_2"/>
    <property type="match status" value="1"/>
</dbReference>
<evidence type="ECO:0000250" key="1"/>
<evidence type="ECO:0000255" key="2">
    <source>
        <dbReference type="HAMAP-Rule" id="MF_00047"/>
    </source>
</evidence>
<comment type="function">
    <text evidence="2">Cell wall formation.</text>
</comment>
<comment type="catalytic activity">
    <reaction evidence="2">
        <text>2 D-alanine + ATP = D-alanyl-D-alanine + ADP + phosphate + H(+)</text>
        <dbReference type="Rhea" id="RHEA:11224"/>
        <dbReference type="ChEBI" id="CHEBI:15378"/>
        <dbReference type="ChEBI" id="CHEBI:30616"/>
        <dbReference type="ChEBI" id="CHEBI:43474"/>
        <dbReference type="ChEBI" id="CHEBI:57416"/>
        <dbReference type="ChEBI" id="CHEBI:57822"/>
        <dbReference type="ChEBI" id="CHEBI:456216"/>
        <dbReference type="EC" id="6.3.2.4"/>
    </reaction>
</comment>
<comment type="cofactor">
    <cofactor evidence="1">
        <name>Mg(2+)</name>
        <dbReference type="ChEBI" id="CHEBI:18420"/>
    </cofactor>
    <cofactor evidence="1">
        <name>Mn(2+)</name>
        <dbReference type="ChEBI" id="CHEBI:29035"/>
    </cofactor>
    <text evidence="1">Binds 2 magnesium or manganese ions per subunit.</text>
</comment>
<comment type="pathway">
    <text evidence="2">Cell wall biogenesis; peptidoglycan biosynthesis.</text>
</comment>
<comment type="subcellular location">
    <subcellularLocation>
        <location evidence="2">Cytoplasm</location>
    </subcellularLocation>
</comment>
<comment type="similarity">
    <text evidence="2">Belongs to the D-alanine--D-alanine ligase family.</text>
</comment>
<keyword id="KW-0067">ATP-binding</keyword>
<keyword id="KW-0133">Cell shape</keyword>
<keyword id="KW-0961">Cell wall biogenesis/degradation</keyword>
<keyword id="KW-0963">Cytoplasm</keyword>
<keyword id="KW-0436">Ligase</keyword>
<keyword id="KW-0460">Magnesium</keyword>
<keyword id="KW-0464">Manganese</keyword>
<keyword id="KW-0479">Metal-binding</keyword>
<keyword id="KW-0547">Nucleotide-binding</keyword>
<keyword id="KW-0573">Peptidoglycan synthesis</keyword>
<gene>
    <name evidence="2" type="primary">ddl</name>
    <name type="ordered locus">STER_1544</name>
</gene>
<sequence>MSKQTLILLYGGRSAEREVSVLSAESVMRAVDYNAFEVKTYFITQSGDFIKTQEFIETPGDDEKLMTNDTVEASQAIKPSDIYEEDAVVFPVLHGPMGEDGSIQGFLETLKLPYVGTNVLSSSVAMDKIMTKRILEVAGVPQVAYTGYIEGEDLEAAVAETLEKLTFPVFVKPANMGSSVGISKAENESELRSAIDLALKYDSRILIEQGVVAREIEVGILGNTTVKTTDPGEVVKDVAFYDYQAKYIDNKITMDIPARVPVEVMTQMRAYAAKAFRALGGCGLARCDFFLTEDGAIYLNELNTMPGFTQWSMYPLLWENMGLSYSDLIKELVVLGQEMFDKRESHLI</sequence>
<protein>
    <recommendedName>
        <fullName evidence="2">D-alanine--D-alanine ligase</fullName>
        <ecNumber evidence="2">6.3.2.4</ecNumber>
    </recommendedName>
    <alternativeName>
        <fullName evidence="2">D-Ala-D-Ala ligase</fullName>
    </alternativeName>
    <alternativeName>
        <fullName evidence="2">D-alanylalanine synthetase</fullName>
    </alternativeName>
</protein>
<organism>
    <name type="scientific">Streptococcus thermophilus (strain ATCC BAA-491 / LMD-9)</name>
    <dbReference type="NCBI Taxonomy" id="322159"/>
    <lineage>
        <taxon>Bacteria</taxon>
        <taxon>Bacillati</taxon>
        <taxon>Bacillota</taxon>
        <taxon>Bacilli</taxon>
        <taxon>Lactobacillales</taxon>
        <taxon>Streptococcaceae</taxon>
        <taxon>Streptococcus</taxon>
    </lineage>
</organism>
<proteinExistence type="inferred from homology"/>
<feature type="chain" id="PRO_1000030508" description="D-alanine--D-alanine ligase">
    <location>
        <begin position="1"/>
        <end position="348"/>
    </location>
</feature>
<feature type="domain" description="ATP-grasp" evidence="2">
    <location>
        <begin position="132"/>
        <end position="334"/>
    </location>
</feature>
<feature type="binding site" evidence="2">
    <location>
        <begin position="162"/>
        <end position="217"/>
    </location>
    <ligand>
        <name>ATP</name>
        <dbReference type="ChEBI" id="CHEBI:30616"/>
    </ligand>
</feature>
<feature type="binding site" evidence="2">
    <location>
        <position position="288"/>
    </location>
    <ligand>
        <name>Mg(2+)</name>
        <dbReference type="ChEBI" id="CHEBI:18420"/>
        <label>1</label>
    </ligand>
</feature>
<feature type="binding site" evidence="2">
    <location>
        <position position="301"/>
    </location>
    <ligand>
        <name>Mg(2+)</name>
        <dbReference type="ChEBI" id="CHEBI:18420"/>
        <label>1</label>
    </ligand>
</feature>
<feature type="binding site" evidence="2">
    <location>
        <position position="301"/>
    </location>
    <ligand>
        <name>Mg(2+)</name>
        <dbReference type="ChEBI" id="CHEBI:18420"/>
        <label>2</label>
    </ligand>
</feature>
<feature type="binding site" evidence="2">
    <location>
        <position position="303"/>
    </location>
    <ligand>
        <name>Mg(2+)</name>
        <dbReference type="ChEBI" id="CHEBI:18420"/>
        <label>2</label>
    </ligand>
</feature>
<name>DDL_STRTD</name>
<accession>Q03JC6</accession>
<reference key="1">
    <citation type="journal article" date="2006" name="Proc. Natl. Acad. Sci. U.S.A.">
        <title>Comparative genomics of the lactic acid bacteria.</title>
        <authorList>
            <person name="Makarova K.S."/>
            <person name="Slesarev A."/>
            <person name="Wolf Y.I."/>
            <person name="Sorokin A."/>
            <person name="Mirkin B."/>
            <person name="Koonin E.V."/>
            <person name="Pavlov A."/>
            <person name="Pavlova N."/>
            <person name="Karamychev V."/>
            <person name="Polouchine N."/>
            <person name="Shakhova V."/>
            <person name="Grigoriev I."/>
            <person name="Lou Y."/>
            <person name="Rohksar D."/>
            <person name="Lucas S."/>
            <person name="Huang K."/>
            <person name="Goodstein D.M."/>
            <person name="Hawkins T."/>
            <person name="Plengvidhya V."/>
            <person name="Welker D."/>
            <person name="Hughes J."/>
            <person name="Goh Y."/>
            <person name="Benson A."/>
            <person name="Baldwin K."/>
            <person name="Lee J.-H."/>
            <person name="Diaz-Muniz I."/>
            <person name="Dosti B."/>
            <person name="Smeianov V."/>
            <person name="Wechter W."/>
            <person name="Barabote R."/>
            <person name="Lorca G."/>
            <person name="Altermann E."/>
            <person name="Barrangou R."/>
            <person name="Ganesan B."/>
            <person name="Xie Y."/>
            <person name="Rawsthorne H."/>
            <person name="Tamir D."/>
            <person name="Parker C."/>
            <person name="Breidt F."/>
            <person name="Broadbent J.R."/>
            <person name="Hutkins R."/>
            <person name="O'Sullivan D."/>
            <person name="Steele J."/>
            <person name="Unlu G."/>
            <person name="Saier M.H. Jr."/>
            <person name="Klaenhammer T."/>
            <person name="Richardson P."/>
            <person name="Kozyavkin S."/>
            <person name="Weimer B.C."/>
            <person name="Mills D.A."/>
        </authorList>
    </citation>
    <scope>NUCLEOTIDE SEQUENCE [LARGE SCALE GENOMIC DNA]</scope>
    <source>
        <strain>ATCC BAA-491 / LMD-9</strain>
    </source>
</reference>